<gene>
    <name type="primary">ptsA</name>
    <name type="ORF">DDB_G0279095</name>
</gene>
<organism>
    <name type="scientific">Dictyostelium discoideum</name>
    <name type="common">Social amoeba</name>
    <dbReference type="NCBI Taxonomy" id="44689"/>
    <lineage>
        <taxon>Eukaryota</taxon>
        <taxon>Amoebozoa</taxon>
        <taxon>Evosea</taxon>
        <taxon>Eumycetozoa</taxon>
        <taxon>Dictyostelia</taxon>
        <taxon>Dictyosteliales</taxon>
        <taxon>Dictyosteliaceae</taxon>
        <taxon>Dictyostelium</taxon>
    </lineage>
</organism>
<name>PTPS_DICDI</name>
<sequence length="135" mass="15771">MSRTVILTRREVFSSSHRLYSDKLSLEENKKIYGKCINSHGHNYVLEVSIKGAVKEDIGMFMNITELKEILKEKVMDKLDHKNLENDVPELKGIVTTTENLSIFIWDQLFPSLKDFLYEVKILETENNFVVYRGE</sequence>
<keyword id="KW-0456">Lyase</keyword>
<keyword id="KW-0479">Metal-binding</keyword>
<keyword id="KW-1185">Reference proteome</keyword>
<keyword id="KW-0783">Tetrahydrobiopterin biosynthesis</keyword>
<keyword id="KW-0862">Zinc</keyword>
<proteinExistence type="inferred from homology"/>
<comment type="function">
    <text evidence="1">Involved in the biosynthesis of tetrahydrobiopterin, an essential cofactor of aromatic amino acid hydroxylases. Catalyzes the transformation of 7,8-dihydroneopterin triphosphate into 6-pyruvoyl tetrahydropterin (By similarity).</text>
</comment>
<comment type="catalytic activity">
    <reaction>
        <text>7,8-dihydroneopterin 3'-triphosphate = 6-pyruvoyl-5,6,7,8-tetrahydropterin + triphosphate + H(+)</text>
        <dbReference type="Rhea" id="RHEA:22048"/>
        <dbReference type="ChEBI" id="CHEBI:15378"/>
        <dbReference type="ChEBI" id="CHEBI:18036"/>
        <dbReference type="ChEBI" id="CHEBI:58462"/>
        <dbReference type="ChEBI" id="CHEBI:136564"/>
        <dbReference type="EC" id="4.2.3.12"/>
    </reaction>
</comment>
<comment type="cofactor">
    <cofactor evidence="1">
        <name>Zn(2+)</name>
        <dbReference type="ChEBI" id="CHEBI:29105"/>
    </cofactor>
    <text evidence="1">Binds 1 zinc ion per subunit.</text>
</comment>
<comment type="pathway">
    <text>Cofactor biosynthesis; tetrahydrobiopterin biosynthesis; tetrahydrobiopterin from 7,8-dihydroneopterin triphosphate: step 1/3.</text>
</comment>
<comment type="subunit">
    <text evidence="1">Homohexamer formed of two homotrimers in a head to head fashion.</text>
</comment>
<comment type="miscellaneous">
    <text>The active site is at the interface between 2 subunits. The proton acceptor Cys is on one subunit, and the charge relay system is on the other subunit.</text>
</comment>
<comment type="similarity">
    <text evidence="2">Belongs to the PTPS family.</text>
</comment>
<reference key="1">
    <citation type="journal article" date="2005" name="Nature">
        <title>The genome of the social amoeba Dictyostelium discoideum.</title>
        <authorList>
            <person name="Eichinger L."/>
            <person name="Pachebat J.A."/>
            <person name="Gloeckner G."/>
            <person name="Rajandream M.A."/>
            <person name="Sucgang R."/>
            <person name="Berriman M."/>
            <person name="Song J."/>
            <person name="Olsen R."/>
            <person name="Szafranski K."/>
            <person name="Xu Q."/>
            <person name="Tunggal B."/>
            <person name="Kummerfeld S."/>
            <person name="Madera M."/>
            <person name="Konfortov B.A."/>
            <person name="Rivero F."/>
            <person name="Bankier A.T."/>
            <person name="Lehmann R."/>
            <person name="Hamlin N."/>
            <person name="Davies R."/>
            <person name="Gaudet P."/>
            <person name="Fey P."/>
            <person name="Pilcher K."/>
            <person name="Chen G."/>
            <person name="Saunders D."/>
            <person name="Sodergren E.J."/>
            <person name="Davis P."/>
            <person name="Kerhornou A."/>
            <person name="Nie X."/>
            <person name="Hall N."/>
            <person name="Anjard C."/>
            <person name="Hemphill L."/>
            <person name="Bason N."/>
            <person name="Farbrother P."/>
            <person name="Desany B."/>
            <person name="Just E."/>
            <person name="Morio T."/>
            <person name="Rost R."/>
            <person name="Churcher C.M."/>
            <person name="Cooper J."/>
            <person name="Haydock S."/>
            <person name="van Driessche N."/>
            <person name="Cronin A."/>
            <person name="Goodhead I."/>
            <person name="Muzny D.M."/>
            <person name="Mourier T."/>
            <person name="Pain A."/>
            <person name="Lu M."/>
            <person name="Harper D."/>
            <person name="Lindsay R."/>
            <person name="Hauser H."/>
            <person name="James K.D."/>
            <person name="Quiles M."/>
            <person name="Madan Babu M."/>
            <person name="Saito T."/>
            <person name="Buchrieser C."/>
            <person name="Wardroper A."/>
            <person name="Felder M."/>
            <person name="Thangavelu M."/>
            <person name="Johnson D."/>
            <person name="Knights A."/>
            <person name="Loulseged H."/>
            <person name="Mungall K.L."/>
            <person name="Oliver K."/>
            <person name="Price C."/>
            <person name="Quail M.A."/>
            <person name="Urushihara H."/>
            <person name="Hernandez J."/>
            <person name="Rabbinowitsch E."/>
            <person name="Steffen D."/>
            <person name="Sanders M."/>
            <person name="Ma J."/>
            <person name="Kohara Y."/>
            <person name="Sharp S."/>
            <person name="Simmonds M.N."/>
            <person name="Spiegler S."/>
            <person name="Tivey A."/>
            <person name="Sugano S."/>
            <person name="White B."/>
            <person name="Walker D."/>
            <person name="Woodward J.R."/>
            <person name="Winckler T."/>
            <person name="Tanaka Y."/>
            <person name="Shaulsky G."/>
            <person name="Schleicher M."/>
            <person name="Weinstock G.M."/>
            <person name="Rosenthal A."/>
            <person name="Cox E.C."/>
            <person name="Chisholm R.L."/>
            <person name="Gibbs R.A."/>
            <person name="Loomis W.F."/>
            <person name="Platzer M."/>
            <person name="Kay R.R."/>
            <person name="Williams J.G."/>
            <person name="Dear P.H."/>
            <person name="Noegel A.A."/>
            <person name="Barrell B.G."/>
            <person name="Kuspa A."/>
        </authorList>
    </citation>
    <scope>NUCLEOTIDE SEQUENCE [LARGE SCALE GENOMIC DNA]</scope>
    <source>
        <strain>AX4</strain>
    </source>
</reference>
<evidence type="ECO:0000250" key="1"/>
<evidence type="ECO:0000305" key="2"/>
<dbReference type="EC" id="4.2.3.12"/>
<dbReference type="EMBL" id="AAFI02000027">
    <property type="protein sequence ID" value="EAS66886.1"/>
    <property type="molecule type" value="Genomic_DNA"/>
</dbReference>
<dbReference type="RefSeq" id="XP_001134570.1">
    <property type="nucleotide sequence ID" value="XM_001134570.1"/>
</dbReference>
<dbReference type="SMR" id="Q1ZXI0"/>
<dbReference type="FunCoup" id="Q1ZXI0">
    <property type="interactions" value="153"/>
</dbReference>
<dbReference type="STRING" id="44689.Q1ZXI0"/>
<dbReference type="PaxDb" id="44689-DDB0232952"/>
<dbReference type="EnsemblProtists" id="EAS66886">
    <property type="protein sequence ID" value="EAS66886"/>
    <property type="gene ID" value="DDB_G0279095"/>
</dbReference>
<dbReference type="GeneID" id="8621869"/>
<dbReference type="KEGG" id="ddi:DDB_G0279095"/>
<dbReference type="dictyBase" id="DDB_G0279095">
    <property type="gene designation" value="ptsA"/>
</dbReference>
<dbReference type="VEuPathDB" id="AmoebaDB:DDB_G0279095"/>
<dbReference type="eggNOG" id="KOG4105">
    <property type="taxonomic scope" value="Eukaryota"/>
</dbReference>
<dbReference type="HOGENOM" id="CLU_111016_2_0_1"/>
<dbReference type="InParanoid" id="Q1ZXI0"/>
<dbReference type="OMA" id="HFNAAHK"/>
<dbReference type="PhylomeDB" id="Q1ZXI0"/>
<dbReference type="Reactome" id="R-DDI-1474151">
    <property type="pathway name" value="Tetrahydrobiopterin (BH4) synthesis, recycling, salvage and regulation"/>
</dbReference>
<dbReference type="UniPathway" id="UPA00849">
    <property type="reaction ID" value="UER00819"/>
</dbReference>
<dbReference type="PRO" id="PR:Q1ZXI0"/>
<dbReference type="Proteomes" id="UP000002195">
    <property type="component" value="Chromosome 3"/>
</dbReference>
<dbReference type="GO" id="GO:0005739">
    <property type="term" value="C:mitochondrion"/>
    <property type="evidence" value="ECO:0000318"/>
    <property type="project" value="GO_Central"/>
</dbReference>
<dbReference type="GO" id="GO:0003874">
    <property type="term" value="F:6-pyruvoyltetrahydropterin synthase activity"/>
    <property type="evidence" value="ECO:0000314"/>
    <property type="project" value="dictyBase"/>
</dbReference>
<dbReference type="GO" id="GO:0046872">
    <property type="term" value="F:metal ion binding"/>
    <property type="evidence" value="ECO:0007669"/>
    <property type="project" value="UniProtKB-KW"/>
</dbReference>
<dbReference type="GO" id="GO:0046656">
    <property type="term" value="P:folic acid biosynthetic process"/>
    <property type="evidence" value="ECO:0000314"/>
    <property type="project" value="dictyBase"/>
</dbReference>
<dbReference type="GO" id="GO:0140460">
    <property type="term" value="P:response to Gram-negative bacterium"/>
    <property type="evidence" value="ECO:0007005"/>
    <property type="project" value="dictyBase"/>
</dbReference>
<dbReference type="GO" id="GO:0006979">
    <property type="term" value="P:response to oxidative stress"/>
    <property type="evidence" value="ECO:0000314"/>
    <property type="project" value="dictyBase"/>
</dbReference>
<dbReference type="GO" id="GO:0006729">
    <property type="term" value="P:tetrahydrobiopterin biosynthetic process"/>
    <property type="evidence" value="ECO:0007669"/>
    <property type="project" value="UniProtKB-UniPathway"/>
</dbReference>
<dbReference type="FunFam" id="3.30.479.10:FF:000003">
    <property type="entry name" value="6-pyruvoyl tetrahydrobiopterin synthase"/>
    <property type="match status" value="1"/>
</dbReference>
<dbReference type="Gene3D" id="3.30.479.10">
    <property type="entry name" value="6-pyruvoyl tetrahydropterin synthase/QueD"/>
    <property type="match status" value="1"/>
</dbReference>
<dbReference type="InterPro" id="IPR007115">
    <property type="entry name" value="6-PTP_synth/QueD"/>
</dbReference>
<dbReference type="InterPro" id="IPR038418">
    <property type="entry name" value="6-PTP_synth/QueD_sf"/>
</dbReference>
<dbReference type="PANTHER" id="PTHR12589:SF7">
    <property type="entry name" value="6-PYRUVOYL TETRAHYDROBIOPTERIN SYNTHASE"/>
    <property type="match status" value="1"/>
</dbReference>
<dbReference type="PANTHER" id="PTHR12589">
    <property type="entry name" value="PYRUVOYL TETRAHYDROBIOPTERIN SYNTHASE"/>
    <property type="match status" value="1"/>
</dbReference>
<dbReference type="Pfam" id="PF01242">
    <property type="entry name" value="PTPS"/>
    <property type="match status" value="1"/>
</dbReference>
<dbReference type="PIRSF" id="PIRSF006113">
    <property type="entry name" value="PTP_synth"/>
    <property type="match status" value="1"/>
</dbReference>
<dbReference type="SUPFAM" id="SSF55620">
    <property type="entry name" value="Tetrahydrobiopterin biosynthesis enzymes-like"/>
    <property type="match status" value="1"/>
</dbReference>
<accession>Q1ZXI0</accession>
<feature type="chain" id="PRO_0000327514" description="6-pyruvoyl tetrahydrobiopterin synthase">
    <location>
        <begin position="1"/>
        <end position="135"/>
    </location>
</feature>
<feature type="active site" description="Proton acceptor" evidence="1">
    <location>
        <position position="36"/>
    </location>
</feature>
<feature type="active site" description="Charge relay system" evidence="1">
    <location>
        <position position="81"/>
    </location>
</feature>
<feature type="active site" description="Charge relay system" evidence="1">
    <location>
        <position position="124"/>
    </location>
</feature>
<feature type="binding site" evidence="1">
    <location>
        <position position="17"/>
    </location>
    <ligand>
        <name>Zn(2+)</name>
        <dbReference type="ChEBI" id="CHEBI:29105"/>
    </ligand>
</feature>
<feature type="binding site" evidence="1">
    <location>
        <position position="40"/>
    </location>
    <ligand>
        <name>Zn(2+)</name>
        <dbReference type="ChEBI" id="CHEBI:29105"/>
    </ligand>
</feature>
<feature type="binding site" evidence="1">
    <location>
        <position position="42"/>
    </location>
    <ligand>
        <name>Zn(2+)</name>
        <dbReference type="ChEBI" id="CHEBI:29105"/>
    </ligand>
</feature>
<protein>
    <recommendedName>
        <fullName>6-pyruvoyl tetrahydrobiopterin synthase</fullName>
        <shortName>PTP synthase</shortName>
        <shortName>PTPS</shortName>
        <ecNumber>4.2.3.12</ecNumber>
    </recommendedName>
</protein>